<accession>Q74CT6</accession>
<reference key="1">
    <citation type="journal article" date="2003" name="Science">
        <title>Genome of Geobacter sulfurreducens: metal reduction in subsurface environments.</title>
        <authorList>
            <person name="Methe B.A."/>
            <person name="Nelson K.E."/>
            <person name="Eisen J.A."/>
            <person name="Paulsen I.T."/>
            <person name="Nelson W.C."/>
            <person name="Heidelberg J.F."/>
            <person name="Wu D."/>
            <person name="Wu M."/>
            <person name="Ward N.L."/>
            <person name="Beanan M.J."/>
            <person name="Dodson R.J."/>
            <person name="Madupu R."/>
            <person name="Brinkac L.M."/>
            <person name="Daugherty S.C."/>
            <person name="DeBoy R.T."/>
            <person name="Durkin A.S."/>
            <person name="Gwinn M.L."/>
            <person name="Kolonay J.F."/>
            <person name="Sullivan S.A."/>
            <person name="Haft D.H."/>
            <person name="Selengut J."/>
            <person name="Davidsen T.M."/>
            <person name="Zafar N."/>
            <person name="White O."/>
            <person name="Tran B."/>
            <person name="Romero C."/>
            <person name="Forberger H.A."/>
            <person name="Weidman J.F."/>
            <person name="Khouri H.M."/>
            <person name="Feldblyum T.V."/>
            <person name="Utterback T.R."/>
            <person name="Van Aken S.E."/>
            <person name="Lovley D.R."/>
            <person name="Fraser C.M."/>
        </authorList>
    </citation>
    <scope>NUCLEOTIDE SEQUENCE [LARGE SCALE GENOMIC DNA]</scope>
    <source>
        <strain>ATCC 51573 / DSM 12127 / PCA</strain>
    </source>
</reference>
<proteinExistence type="inferred from homology"/>
<feature type="chain" id="PRO_0000229241" description="Ribosome maturation factor RimP">
    <location>
        <begin position="1"/>
        <end position="159"/>
    </location>
</feature>
<dbReference type="EMBL" id="AE017180">
    <property type="protein sequence ID" value="AAR34959.1"/>
    <property type="molecule type" value="Genomic_DNA"/>
</dbReference>
<dbReference type="RefSeq" id="NP_952636.1">
    <property type="nucleotide sequence ID" value="NC_002939.5"/>
</dbReference>
<dbReference type="RefSeq" id="WP_010942230.1">
    <property type="nucleotide sequence ID" value="NC_002939.5"/>
</dbReference>
<dbReference type="SMR" id="Q74CT6"/>
<dbReference type="FunCoup" id="Q74CT6">
    <property type="interactions" value="355"/>
</dbReference>
<dbReference type="STRING" id="243231.GSU1585"/>
<dbReference type="EnsemblBacteria" id="AAR34959">
    <property type="protein sequence ID" value="AAR34959"/>
    <property type="gene ID" value="GSU1585"/>
</dbReference>
<dbReference type="KEGG" id="gsu:GSU1585"/>
<dbReference type="PATRIC" id="fig|243231.5.peg.1626"/>
<dbReference type="eggNOG" id="COG0779">
    <property type="taxonomic scope" value="Bacteria"/>
</dbReference>
<dbReference type="HOGENOM" id="CLU_070525_2_2_7"/>
<dbReference type="InParanoid" id="Q74CT6"/>
<dbReference type="OrthoDB" id="9805006at2"/>
<dbReference type="Proteomes" id="UP000000577">
    <property type="component" value="Chromosome"/>
</dbReference>
<dbReference type="GO" id="GO:0005829">
    <property type="term" value="C:cytosol"/>
    <property type="evidence" value="ECO:0000318"/>
    <property type="project" value="GO_Central"/>
</dbReference>
<dbReference type="GO" id="GO:0000028">
    <property type="term" value="P:ribosomal small subunit assembly"/>
    <property type="evidence" value="ECO:0000318"/>
    <property type="project" value="GO_Central"/>
</dbReference>
<dbReference type="GO" id="GO:0006412">
    <property type="term" value="P:translation"/>
    <property type="evidence" value="ECO:0000318"/>
    <property type="project" value="GO_Central"/>
</dbReference>
<dbReference type="CDD" id="cd01734">
    <property type="entry name" value="YlxS_C"/>
    <property type="match status" value="1"/>
</dbReference>
<dbReference type="FunFam" id="3.30.300.70:FF:000001">
    <property type="entry name" value="Ribosome maturation factor RimP"/>
    <property type="match status" value="1"/>
</dbReference>
<dbReference type="Gene3D" id="2.30.30.180">
    <property type="entry name" value="Ribosome maturation factor RimP, C-terminal domain"/>
    <property type="match status" value="1"/>
</dbReference>
<dbReference type="Gene3D" id="3.30.300.70">
    <property type="entry name" value="RimP-like superfamily, N-terminal"/>
    <property type="match status" value="1"/>
</dbReference>
<dbReference type="HAMAP" id="MF_01077">
    <property type="entry name" value="RimP"/>
    <property type="match status" value="1"/>
</dbReference>
<dbReference type="InterPro" id="IPR003728">
    <property type="entry name" value="Ribosome_maturation_RimP"/>
</dbReference>
<dbReference type="InterPro" id="IPR028998">
    <property type="entry name" value="RimP_C"/>
</dbReference>
<dbReference type="InterPro" id="IPR036847">
    <property type="entry name" value="RimP_C_sf"/>
</dbReference>
<dbReference type="InterPro" id="IPR028989">
    <property type="entry name" value="RimP_N"/>
</dbReference>
<dbReference type="InterPro" id="IPR035956">
    <property type="entry name" value="RimP_N_sf"/>
</dbReference>
<dbReference type="NCBIfam" id="NF011241">
    <property type="entry name" value="PRK14647.1"/>
    <property type="match status" value="1"/>
</dbReference>
<dbReference type="PANTHER" id="PTHR33867">
    <property type="entry name" value="RIBOSOME MATURATION FACTOR RIMP"/>
    <property type="match status" value="1"/>
</dbReference>
<dbReference type="PANTHER" id="PTHR33867:SF1">
    <property type="entry name" value="RIBOSOME MATURATION FACTOR RIMP"/>
    <property type="match status" value="1"/>
</dbReference>
<dbReference type="Pfam" id="PF17384">
    <property type="entry name" value="DUF150_C"/>
    <property type="match status" value="1"/>
</dbReference>
<dbReference type="Pfam" id="PF02576">
    <property type="entry name" value="RimP_N"/>
    <property type="match status" value="1"/>
</dbReference>
<dbReference type="SUPFAM" id="SSF74942">
    <property type="entry name" value="YhbC-like, C-terminal domain"/>
    <property type="match status" value="1"/>
</dbReference>
<dbReference type="SUPFAM" id="SSF75420">
    <property type="entry name" value="YhbC-like, N-terminal domain"/>
    <property type="match status" value="1"/>
</dbReference>
<sequence>MQKDDVAGRITAVAEQVLTPQGLELVEVEYKREGRQMVLRLFVDKPGGISLDDCAAVSRELSEILDVEDFIRENYTLEVSSPGLNRPLKKEADYERYAGRLVKVRTFELLADEEGNRRKTFLGDLVGLSDGVVTLTLREGQLARIPLDKIAKANLEFEF</sequence>
<gene>
    <name evidence="1" type="primary">rimP</name>
    <name type="ordered locus">GSU1585</name>
</gene>
<comment type="function">
    <text evidence="1">Required for maturation of 30S ribosomal subunits.</text>
</comment>
<comment type="subcellular location">
    <subcellularLocation>
        <location evidence="1">Cytoplasm</location>
    </subcellularLocation>
</comment>
<comment type="similarity">
    <text evidence="1">Belongs to the RimP family.</text>
</comment>
<protein>
    <recommendedName>
        <fullName evidence="1">Ribosome maturation factor RimP</fullName>
    </recommendedName>
</protein>
<name>RIMP_GEOSL</name>
<evidence type="ECO:0000255" key="1">
    <source>
        <dbReference type="HAMAP-Rule" id="MF_01077"/>
    </source>
</evidence>
<keyword id="KW-0963">Cytoplasm</keyword>
<keyword id="KW-1185">Reference proteome</keyword>
<keyword id="KW-0690">Ribosome biogenesis</keyword>
<organism>
    <name type="scientific">Geobacter sulfurreducens (strain ATCC 51573 / DSM 12127 / PCA)</name>
    <dbReference type="NCBI Taxonomy" id="243231"/>
    <lineage>
        <taxon>Bacteria</taxon>
        <taxon>Pseudomonadati</taxon>
        <taxon>Thermodesulfobacteriota</taxon>
        <taxon>Desulfuromonadia</taxon>
        <taxon>Geobacterales</taxon>
        <taxon>Geobacteraceae</taxon>
        <taxon>Geobacter</taxon>
    </lineage>
</organism>